<comment type="function">
    <text evidence="1 2">Late protein responsible for processing most or all of the viral core and membrane proteins known to undergo morphogenesis-associated proteolysis. These proteolytic events are involved in the transformation of immature virions (IV) into mature virions (MV). Probably cleaves at least the OPG129, OPG136, OPG098, and OPG144 precursors preferentially at Ala-Gly-|-Ala motifs. Also seems to process Ala-Gly-|-Ser and Ala-Gly-|-Thr motifs (By similarity).</text>
</comment>
<comment type="subcellular location">
    <subcellularLocation>
        <location evidence="2">Virion</location>
    </subcellularLocation>
    <text evidence="2">Present in the virion core.</text>
</comment>
<comment type="induction">
    <text>Expressed late in the viral replicative cycle.</text>
</comment>
<comment type="similarity">
    <text evidence="3">Belongs to the peptidase C57 family.</text>
</comment>
<organism>
    <name type="scientific">Variola virus</name>
    <dbReference type="NCBI Taxonomy" id="10255"/>
    <lineage>
        <taxon>Viruses</taxon>
        <taxon>Varidnaviria</taxon>
        <taxon>Bamfordvirae</taxon>
        <taxon>Nucleocytoviricota</taxon>
        <taxon>Pokkesviricetes</taxon>
        <taxon>Chitovirales</taxon>
        <taxon>Poxviridae</taxon>
        <taxon>Chordopoxvirinae</taxon>
        <taxon>Orthopoxvirus</taxon>
    </lineage>
</organism>
<feature type="chain" id="PRO_0000448203" description="Core protease OPG082">
    <location>
        <begin position="1"/>
        <end position="423"/>
    </location>
</feature>
<feature type="active site" evidence="2">
    <location>
        <position position="241"/>
    </location>
</feature>
<feature type="active site" evidence="2">
    <location>
        <position position="248"/>
    </location>
</feature>
<feature type="active site" evidence="2">
    <location>
        <position position="328"/>
    </location>
</feature>
<evidence type="ECO:0000250" key="1"/>
<evidence type="ECO:0000250" key="2">
    <source>
        <dbReference type="UniProtKB" id="P12926"/>
    </source>
</evidence>
<evidence type="ECO:0000305" key="3"/>
<gene>
    <name type="primary">OPG083</name>
    <name type="ORF">I7L</name>
</gene>
<name>PG083_VARV</name>
<sequence length="423" mass="49142">MERYTDLVISKIPELGFTNLLCHIYSLAGLCSNIDVSKFLTNCNGYVVEKYDKSTTAGKVSCIPIGMMLELVESRHLSRPNSSDELDQKKELTDELKTRYHSIYDVFELPTSIPLAYFFKPRLREKVSKAIDFSQMDLKIDDLSRKGIHTGENPKVVKMKIEPERGAWMSNRSIKNLVSQFAYGSEVDYIGQFDMRFLNSLAIHEKFDAFMNKHILSYILKDKIKSSTSRFVMFGFCYLSHWKCVIYDKKQCLVSFYDSGGNIPTEFHHYNNFYFYSFSDGFNTNHRHSVLDNTNCDIDVLFRFFECIFGAKIGCINVEVNQLLESECGMFISLFMILCTRTPPKSFKSLKKVYTFFKFLADKKMTLFKSILFNLQDLSLDITETDNAGLKEYKRMEKWTKKSINVICDKLTTKLNRIVDDDE</sequence>
<keyword id="KW-0378">Hydrolase</keyword>
<keyword id="KW-0426">Late protein</keyword>
<keyword id="KW-0645">Protease</keyword>
<keyword id="KW-0788">Thiol protease</keyword>
<keyword id="KW-0946">Virion</keyword>
<reference key="1">
    <citation type="journal article" date="1993" name="Nature">
        <title>Potential virulence determinants in terminal regions of variola smallpox virus genome.</title>
        <authorList>
            <person name="Massung R.F."/>
            <person name="Esposito J.J."/>
            <person name="Liu L.I."/>
            <person name="Qi J."/>
            <person name="Utterback T.R."/>
            <person name="Knight J.C."/>
            <person name="Aubin L."/>
            <person name="Yuran T.E."/>
            <person name="Parsons J.M."/>
            <person name="Loparev V.N."/>
            <person name="Selivanov N.A."/>
            <person name="Cavallaro K.F."/>
            <person name="Kerlavage A.R."/>
            <person name="Mahy B.W.J."/>
            <person name="Venter J.C."/>
        </authorList>
    </citation>
    <scope>NUCLEOTIDE SEQUENCE [GENOMIC DNA]</scope>
    <source>
        <strain>Bangladesh-1975</strain>
    </source>
</reference>
<dbReference type="EC" id="3.4.22.-" evidence="2"/>
<dbReference type="EMBL" id="L22579">
    <property type="protein sequence ID" value="AAA60809.1"/>
    <property type="molecule type" value="Genomic_DNA"/>
</dbReference>
<dbReference type="PIR" id="T28499">
    <property type="entry name" value="T28499"/>
</dbReference>
<dbReference type="KEGG" id="vg:1486462"/>
<dbReference type="Proteomes" id="UP000119805">
    <property type="component" value="Segment"/>
</dbReference>
<dbReference type="GO" id="GO:0044423">
    <property type="term" value="C:virion component"/>
    <property type="evidence" value="ECO:0007669"/>
    <property type="project" value="UniProtKB-KW"/>
</dbReference>
<dbReference type="GO" id="GO:0008234">
    <property type="term" value="F:cysteine-type peptidase activity"/>
    <property type="evidence" value="ECO:0007669"/>
    <property type="project" value="UniProtKB-KW"/>
</dbReference>
<dbReference type="GO" id="GO:0006508">
    <property type="term" value="P:proteolysis"/>
    <property type="evidence" value="ECO:0007669"/>
    <property type="project" value="UniProtKB-KW"/>
</dbReference>
<dbReference type="InterPro" id="IPR038765">
    <property type="entry name" value="Papain-like_cys_pep_sf"/>
</dbReference>
<dbReference type="InterPro" id="IPR004970">
    <property type="entry name" value="Peptidase_C57"/>
</dbReference>
<dbReference type="Pfam" id="PF03290">
    <property type="entry name" value="Peptidase_C57"/>
    <property type="match status" value="1"/>
</dbReference>
<dbReference type="SUPFAM" id="SSF54001">
    <property type="entry name" value="Cysteine proteinases"/>
    <property type="match status" value="1"/>
</dbReference>
<proteinExistence type="evidence at transcript level"/>
<protein>
    <recommendedName>
        <fullName>Core protease OPG082</fullName>
        <ecNumber evidence="2">3.4.22.-</ecNumber>
    </recommendedName>
    <alternativeName>
        <fullName>Core protease I7</fullName>
        <ecNumber>3.4.22.-</ecNumber>
    </alternativeName>
</protein>
<organismHost>
    <name type="scientific">Homo sapiens</name>
    <name type="common">Human</name>
    <dbReference type="NCBI Taxonomy" id="9606"/>
</organismHost>
<accession>P0DOL4</accession>
<accession>P33003</accession>